<reference key="1">
    <citation type="journal article" date="2006" name="Genome Biol.">
        <title>The genome of Rhizobium leguminosarum has recognizable core and accessory components.</title>
        <authorList>
            <person name="Young J.P.W."/>
            <person name="Crossman L.C."/>
            <person name="Johnston A.W.B."/>
            <person name="Thomson N.R."/>
            <person name="Ghazoui Z.F."/>
            <person name="Hull K.H."/>
            <person name="Wexler M."/>
            <person name="Curson A.R.J."/>
            <person name="Todd J.D."/>
            <person name="Poole P.S."/>
            <person name="Mauchline T.H."/>
            <person name="East A.K."/>
            <person name="Quail M.A."/>
            <person name="Churcher C."/>
            <person name="Arrowsmith C."/>
            <person name="Cherevach I."/>
            <person name="Chillingworth T."/>
            <person name="Clarke K."/>
            <person name="Cronin A."/>
            <person name="Davis P."/>
            <person name="Fraser A."/>
            <person name="Hance Z."/>
            <person name="Hauser H."/>
            <person name="Jagels K."/>
            <person name="Moule S."/>
            <person name="Mungall K."/>
            <person name="Norbertczak H."/>
            <person name="Rabbinowitsch E."/>
            <person name="Sanders M."/>
            <person name="Simmonds M."/>
            <person name="Whitehead S."/>
            <person name="Parkhill J."/>
        </authorList>
    </citation>
    <scope>NUCLEOTIDE SEQUENCE [LARGE SCALE GENOMIC DNA]</scope>
    <source>
        <strain>DSM 114642 / LMG 32736 / 3841</strain>
    </source>
</reference>
<name>PSTB1_RHIJ3</name>
<feature type="chain" id="PRO_0000272508" description="Phosphate import ATP-binding protein PstB 1">
    <location>
        <begin position="1"/>
        <end position="271"/>
    </location>
</feature>
<feature type="domain" description="ABC transporter" evidence="1">
    <location>
        <begin position="24"/>
        <end position="266"/>
    </location>
</feature>
<feature type="binding site" evidence="1">
    <location>
        <begin position="56"/>
        <end position="63"/>
    </location>
    <ligand>
        <name>ATP</name>
        <dbReference type="ChEBI" id="CHEBI:30616"/>
    </ligand>
</feature>
<organism>
    <name type="scientific">Rhizobium johnstonii (strain DSM 114642 / LMG 32736 / 3841)</name>
    <name type="common">Rhizobium leguminosarum bv. viciae</name>
    <dbReference type="NCBI Taxonomy" id="216596"/>
    <lineage>
        <taxon>Bacteria</taxon>
        <taxon>Pseudomonadati</taxon>
        <taxon>Pseudomonadota</taxon>
        <taxon>Alphaproteobacteria</taxon>
        <taxon>Hyphomicrobiales</taxon>
        <taxon>Rhizobiaceae</taxon>
        <taxon>Rhizobium/Agrobacterium group</taxon>
        <taxon>Rhizobium</taxon>
        <taxon>Rhizobium johnstonii</taxon>
    </lineage>
</organism>
<gene>
    <name evidence="1" type="primary">pstB1</name>
    <name type="ordered locus">RL0545</name>
</gene>
<dbReference type="EC" id="7.3.2.1" evidence="1"/>
<dbReference type="EMBL" id="AM236080">
    <property type="protein sequence ID" value="CAK06039.1"/>
    <property type="molecule type" value="Genomic_DNA"/>
</dbReference>
<dbReference type="SMR" id="Q1MLW4"/>
<dbReference type="EnsemblBacteria" id="CAK06039">
    <property type="protein sequence ID" value="CAK06039"/>
    <property type="gene ID" value="RL0545"/>
</dbReference>
<dbReference type="KEGG" id="rle:RL0545"/>
<dbReference type="eggNOG" id="COG1117">
    <property type="taxonomic scope" value="Bacteria"/>
</dbReference>
<dbReference type="HOGENOM" id="CLU_000604_1_22_5"/>
<dbReference type="Proteomes" id="UP000006575">
    <property type="component" value="Chromosome"/>
</dbReference>
<dbReference type="GO" id="GO:0005886">
    <property type="term" value="C:plasma membrane"/>
    <property type="evidence" value="ECO:0007669"/>
    <property type="project" value="UniProtKB-SubCell"/>
</dbReference>
<dbReference type="GO" id="GO:0005524">
    <property type="term" value="F:ATP binding"/>
    <property type="evidence" value="ECO:0007669"/>
    <property type="project" value="UniProtKB-KW"/>
</dbReference>
<dbReference type="GO" id="GO:0016887">
    <property type="term" value="F:ATP hydrolysis activity"/>
    <property type="evidence" value="ECO:0007669"/>
    <property type="project" value="InterPro"/>
</dbReference>
<dbReference type="GO" id="GO:0015415">
    <property type="term" value="F:ATPase-coupled phosphate ion transmembrane transporter activity"/>
    <property type="evidence" value="ECO:0007669"/>
    <property type="project" value="UniProtKB-EC"/>
</dbReference>
<dbReference type="GO" id="GO:0035435">
    <property type="term" value="P:phosphate ion transmembrane transport"/>
    <property type="evidence" value="ECO:0007669"/>
    <property type="project" value="InterPro"/>
</dbReference>
<dbReference type="CDD" id="cd03260">
    <property type="entry name" value="ABC_PstB_phosphate_transporter"/>
    <property type="match status" value="1"/>
</dbReference>
<dbReference type="Gene3D" id="3.40.50.300">
    <property type="entry name" value="P-loop containing nucleotide triphosphate hydrolases"/>
    <property type="match status" value="1"/>
</dbReference>
<dbReference type="InterPro" id="IPR003593">
    <property type="entry name" value="AAA+_ATPase"/>
</dbReference>
<dbReference type="InterPro" id="IPR003439">
    <property type="entry name" value="ABC_transporter-like_ATP-bd"/>
</dbReference>
<dbReference type="InterPro" id="IPR017871">
    <property type="entry name" value="ABC_transporter-like_CS"/>
</dbReference>
<dbReference type="InterPro" id="IPR027417">
    <property type="entry name" value="P-loop_NTPase"/>
</dbReference>
<dbReference type="InterPro" id="IPR005670">
    <property type="entry name" value="PstB-like"/>
</dbReference>
<dbReference type="NCBIfam" id="TIGR00972">
    <property type="entry name" value="3a0107s01c2"/>
    <property type="match status" value="1"/>
</dbReference>
<dbReference type="PANTHER" id="PTHR43423">
    <property type="entry name" value="ABC TRANSPORTER I FAMILY MEMBER 17"/>
    <property type="match status" value="1"/>
</dbReference>
<dbReference type="PANTHER" id="PTHR43423:SF1">
    <property type="entry name" value="ABC TRANSPORTER I FAMILY MEMBER 17"/>
    <property type="match status" value="1"/>
</dbReference>
<dbReference type="Pfam" id="PF00005">
    <property type="entry name" value="ABC_tran"/>
    <property type="match status" value="1"/>
</dbReference>
<dbReference type="SMART" id="SM00382">
    <property type="entry name" value="AAA"/>
    <property type="match status" value="1"/>
</dbReference>
<dbReference type="SUPFAM" id="SSF52540">
    <property type="entry name" value="P-loop containing nucleoside triphosphate hydrolases"/>
    <property type="match status" value="1"/>
</dbReference>
<dbReference type="PROSITE" id="PS00211">
    <property type="entry name" value="ABC_TRANSPORTER_1"/>
    <property type="match status" value="1"/>
</dbReference>
<dbReference type="PROSITE" id="PS50893">
    <property type="entry name" value="ABC_TRANSPORTER_2"/>
    <property type="match status" value="1"/>
</dbReference>
<dbReference type="PROSITE" id="PS51238">
    <property type="entry name" value="PSTB"/>
    <property type="match status" value="1"/>
</dbReference>
<sequence length="271" mass="30237">MNMLTEAAVEKALDHKMSNVPYKMIGKDVSVYYGEKRALFDVNLNVRENTVTALIGPSGCGKSTFLRCLNRMNDTIDGCRVTGKITLDTDDVYDPDIDVVELRARVGMVFQKPNPFPKTIYENVSYGPRIHGLAKSKADLDQIVETSLQRAGLWNEVKDRVHESGTGLSGGQQQRLCIARAVAVSPEVILMDEPCSALDPIATAKVEELIHELRENYTIVIVTHSMQQAARVSQRTAMFHLGNLVEENDTDKMFTNPDDPRTQDYIMGRFG</sequence>
<keyword id="KW-0067">ATP-binding</keyword>
<keyword id="KW-0997">Cell inner membrane</keyword>
<keyword id="KW-1003">Cell membrane</keyword>
<keyword id="KW-0472">Membrane</keyword>
<keyword id="KW-0547">Nucleotide-binding</keyword>
<keyword id="KW-0592">Phosphate transport</keyword>
<keyword id="KW-1278">Translocase</keyword>
<keyword id="KW-0813">Transport</keyword>
<protein>
    <recommendedName>
        <fullName evidence="1">Phosphate import ATP-binding protein PstB 1</fullName>
        <ecNumber evidence="1">7.3.2.1</ecNumber>
    </recommendedName>
    <alternativeName>
        <fullName evidence="1">ABC phosphate transporter 1</fullName>
    </alternativeName>
    <alternativeName>
        <fullName evidence="1">Phosphate-transporting ATPase 1</fullName>
    </alternativeName>
</protein>
<comment type="function">
    <text evidence="1">Part of the ABC transporter complex PstSACB involved in phosphate import. Responsible for energy coupling to the transport system.</text>
</comment>
<comment type="catalytic activity">
    <reaction evidence="1">
        <text>phosphate(out) + ATP + H2O = ADP + 2 phosphate(in) + H(+)</text>
        <dbReference type="Rhea" id="RHEA:24440"/>
        <dbReference type="ChEBI" id="CHEBI:15377"/>
        <dbReference type="ChEBI" id="CHEBI:15378"/>
        <dbReference type="ChEBI" id="CHEBI:30616"/>
        <dbReference type="ChEBI" id="CHEBI:43474"/>
        <dbReference type="ChEBI" id="CHEBI:456216"/>
        <dbReference type="EC" id="7.3.2.1"/>
    </reaction>
</comment>
<comment type="subunit">
    <text evidence="1">The complex is composed of two ATP-binding proteins (PstB), two transmembrane proteins (PstC and PstA) and a solute-binding protein (PstS).</text>
</comment>
<comment type="subcellular location">
    <subcellularLocation>
        <location evidence="1">Cell inner membrane</location>
        <topology evidence="1">Peripheral membrane protein</topology>
    </subcellularLocation>
</comment>
<comment type="similarity">
    <text evidence="1">Belongs to the ABC transporter superfamily. Phosphate importer (TC 3.A.1.7) family.</text>
</comment>
<accession>Q1MLW4</accession>
<evidence type="ECO:0000255" key="1">
    <source>
        <dbReference type="HAMAP-Rule" id="MF_01702"/>
    </source>
</evidence>
<proteinExistence type="inferred from homology"/>